<proteinExistence type="inferred from homology"/>
<protein>
    <recommendedName>
        <fullName>High osmolarity signaling protein sho1</fullName>
    </recommendedName>
    <alternativeName>
        <fullName>Osmosensor sho1</fullName>
    </alternativeName>
</protein>
<dbReference type="EMBL" id="EQ963477">
    <property type="protein sequence ID" value="EED51959.1"/>
    <property type="molecule type" value="Genomic_DNA"/>
</dbReference>
<dbReference type="RefSeq" id="XP_002378966.1">
    <property type="nucleotide sequence ID" value="XM_002378925.1"/>
</dbReference>
<dbReference type="SMR" id="B8NEM4"/>
<dbReference type="STRING" id="332952.B8NEM4"/>
<dbReference type="EnsemblFungi" id="EED51959">
    <property type="protein sequence ID" value="EED51959"/>
    <property type="gene ID" value="AFLA_062220"/>
</dbReference>
<dbReference type="VEuPathDB" id="FungiDB:AFLA_005280"/>
<dbReference type="eggNOG" id="ENOG502QW7A">
    <property type="taxonomic scope" value="Eukaryota"/>
</dbReference>
<dbReference type="HOGENOM" id="CLU_043316_1_0_1"/>
<dbReference type="OMA" id="NIVWIFY"/>
<dbReference type="GO" id="GO:0005886">
    <property type="term" value="C:plasma membrane"/>
    <property type="evidence" value="ECO:0007669"/>
    <property type="project" value="UniProtKB-SubCell"/>
</dbReference>
<dbReference type="CDD" id="cd11855">
    <property type="entry name" value="SH3_Sho1p"/>
    <property type="match status" value="1"/>
</dbReference>
<dbReference type="FunFam" id="2.30.30.40:FF:000213">
    <property type="entry name" value="High osmolarity signaling protein SHO1"/>
    <property type="match status" value="1"/>
</dbReference>
<dbReference type="Gene3D" id="2.30.30.40">
    <property type="entry name" value="SH3 Domains"/>
    <property type="match status" value="1"/>
</dbReference>
<dbReference type="InterPro" id="IPR036028">
    <property type="entry name" value="SH3-like_dom_sf"/>
</dbReference>
<dbReference type="InterPro" id="IPR001452">
    <property type="entry name" value="SH3_domain"/>
</dbReference>
<dbReference type="InterPro" id="IPR035522">
    <property type="entry name" value="Sho1_SH3"/>
</dbReference>
<dbReference type="Pfam" id="PF00018">
    <property type="entry name" value="SH3_1"/>
    <property type="match status" value="1"/>
</dbReference>
<dbReference type="SMART" id="SM00326">
    <property type="entry name" value="SH3"/>
    <property type="match status" value="1"/>
</dbReference>
<dbReference type="SUPFAM" id="SSF50044">
    <property type="entry name" value="SH3-domain"/>
    <property type="match status" value="1"/>
</dbReference>
<dbReference type="PROSITE" id="PS50002">
    <property type="entry name" value="SH3"/>
    <property type="match status" value="1"/>
</dbReference>
<evidence type="ECO:0000250" key="1"/>
<evidence type="ECO:0000255" key="2"/>
<evidence type="ECO:0000255" key="3">
    <source>
        <dbReference type="PROSITE-ProRule" id="PRU00192"/>
    </source>
</evidence>
<evidence type="ECO:0000256" key="4">
    <source>
        <dbReference type="SAM" id="MobiDB-lite"/>
    </source>
</evidence>
<evidence type="ECO:0000305" key="5"/>
<sequence>MVAYSTPSSSLHKPSPYNESRRMARFRPSNILGDPFALATISISILAWVIAFISSIVSAINARGYPTYSWWGVAYSLCIILGMTAVFGTDTGSVYGVAIVGYLSAGMVITTLGVNSLVYRSDSASQAAGAGFILMSMVIVIWIFYFGSTPQASHRGFIDSFALQKEHPGAYGNGRPMSTAFGNRPETTSSQAPQMYTSAQLNGFETSSPVSGYPGGAPGSENRSSSQPRFGNPSNANLTANGNENEVPQPTEYPYRAKAIYSYDANPEDANEISFTKHEILEVSDVSGRWWQARKSNGDTGIAPSNYLILL</sequence>
<name>SHO1_ASPFN</name>
<accession>B8NEM4</accession>
<organism>
    <name type="scientific">Aspergillus flavus (strain ATCC 200026 / FGSC A1120 / IAM 13836 / NRRL 3357 / JCM 12722 / SRRC 167)</name>
    <dbReference type="NCBI Taxonomy" id="332952"/>
    <lineage>
        <taxon>Eukaryota</taxon>
        <taxon>Fungi</taxon>
        <taxon>Dikarya</taxon>
        <taxon>Ascomycota</taxon>
        <taxon>Pezizomycotina</taxon>
        <taxon>Eurotiomycetes</taxon>
        <taxon>Eurotiomycetidae</taxon>
        <taxon>Eurotiales</taxon>
        <taxon>Aspergillaceae</taxon>
        <taxon>Aspergillus</taxon>
        <taxon>Aspergillus subgen. Circumdati</taxon>
    </lineage>
</organism>
<comment type="function">
    <text evidence="1">Plasma membrane osmosensor that activates the high osmolarity glycerol (HOG) MAPK signaling pathway in response to high osmolarity.</text>
</comment>
<comment type="subunit">
    <text evidence="1">Forms homooligomers.</text>
</comment>
<comment type="subcellular location">
    <subcellularLocation>
        <location evidence="1">Cell membrane</location>
        <topology evidence="1">Multi-pass membrane protein</topology>
    </subcellularLocation>
</comment>
<comment type="similarity">
    <text evidence="5">Belongs to the SHO1 family.</text>
</comment>
<keyword id="KW-1003">Cell membrane</keyword>
<keyword id="KW-0472">Membrane</keyword>
<keyword id="KW-0728">SH3 domain</keyword>
<keyword id="KW-0346">Stress response</keyword>
<keyword id="KW-0812">Transmembrane</keyword>
<keyword id="KW-1133">Transmembrane helix</keyword>
<reference key="1">
    <citation type="journal article" date="2015" name="Genome Announc.">
        <title>Genome sequence of Aspergillus flavus NRRL 3357, a strain that causes aflatoxin contamination of food and feed.</title>
        <authorList>
            <person name="Nierman W.C."/>
            <person name="Yu J."/>
            <person name="Fedorova-Abrams N.D."/>
            <person name="Losada L."/>
            <person name="Cleveland T.E."/>
            <person name="Bhatnagar D."/>
            <person name="Bennett J.W."/>
            <person name="Dean R."/>
            <person name="Payne G.A."/>
        </authorList>
    </citation>
    <scope>NUCLEOTIDE SEQUENCE [LARGE SCALE GENOMIC DNA]</scope>
    <source>
        <strain>ATCC 200026 / FGSC A1120 / IAM 13836 / NRRL 3357 / JCM 12722 / SRRC 167</strain>
    </source>
</reference>
<gene>
    <name type="primary">sho1</name>
    <name type="ORF">AFLA_062220</name>
</gene>
<feature type="chain" id="PRO_0000410360" description="High osmolarity signaling protein sho1">
    <location>
        <begin position="1"/>
        <end position="311"/>
    </location>
</feature>
<feature type="topological domain" description="Cytoplasmic" evidence="2">
    <location>
        <begin position="1"/>
        <end position="35"/>
    </location>
</feature>
<feature type="transmembrane region" description="Helical" evidence="2">
    <location>
        <begin position="36"/>
        <end position="56"/>
    </location>
</feature>
<feature type="topological domain" description="Extracellular" evidence="2">
    <location>
        <begin position="57"/>
        <end position="67"/>
    </location>
</feature>
<feature type="transmembrane region" description="Helical" evidence="2">
    <location>
        <begin position="68"/>
        <end position="88"/>
    </location>
</feature>
<feature type="topological domain" description="Cytoplasmic" evidence="2">
    <location>
        <begin position="89"/>
        <end position="93"/>
    </location>
</feature>
<feature type="transmembrane region" description="Helical" evidence="2">
    <location>
        <begin position="94"/>
        <end position="114"/>
    </location>
</feature>
<feature type="topological domain" description="Extracellular" evidence="2">
    <location>
        <begin position="115"/>
        <end position="126"/>
    </location>
</feature>
<feature type="transmembrane region" description="Helical" evidence="2">
    <location>
        <begin position="127"/>
        <end position="147"/>
    </location>
</feature>
<feature type="topological domain" description="Cytoplasmic" evidence="2">
    <location>
        <begin position="148"/>
        <end position="311"/>
    </location>
</feature>
<feature type="domain" description="SH3" evidence="3">
    <location>
        <begin position="252"/>
        <end position="311"/>
    </location>
</feature>
<feature type="region of interest" description="Disordered" evidence="4">
    <location>
        <begin position="172"/>
        <end position="191"/>
    </location>
</feature>
<feature type="region of interest" description="Disordered" evidence="4">
    <location>
        <begin position="207"/>
        <end position="251"/>
    </location>
</feature>
<feature type="compositionally biased region" description="Polar residues" evidence="4">
    <location>
        <begin position="221"/>
        <end position="248"/>
    </location>
</feature>